<name>PGK_ALCBS</name>
<gene>
    <name evidence="1" type="primary">pgk</name>
    <name type="ordered locus">ABO_2613</name>
</gene>
<keyword id="KW-0067">ATP-binding</keyword>
<keyword id="KW-0963">Cytoplasm</keyword>
<keyword id="KW-0324">Glycolysis</keyword>
<keyword id="KW-0418">Kinase</keyword>
<keyword id="KW-0547">Nucleotide-binding</keyword>
<keyword id="KW-1185">Reference proteome</keyword>
<keyword id="KW-0808">Transferase</keyword>
<protein>
    <recommendedName>
        <fullName evidence="1">Phosphoglycerate kinase</fullName>
        <ecNumber evidence="1">2.7.2.3</ecNumber>
    </recommendedName>
</protein>
<evidence type="ECO:0000255" key="1">
    <source>
        <dbReference type="HAMAP-Rule" id="MF_00145"/>
    </source>
</evidence>
<organism>
    <name type="scientific">Alcanivorax borkumensis (strain ATCC 700651 / DSM 11573 / NCIMB 13689 / SK2)</name>
    <dbReference type="NCBI Taxonomy" id="393595"/>
    <lineage>
        <taxon>Bacteria</taxon>
        <taxon>Pseudomonadati</taxon>
        <taxon>Pseudomonadota</taxon>
        <taxon>Gammaproteobacteria</taxon>
        <taxon>Oceanospirillales</taxon>
        <taxon>Alcanivoracaceae</taxon>
        <taxon>Alcanivorax</taxon>
    </lineage>
</organism>
<proteinExistence type="inferred from homology"/>
<sequence length="387" mass="40712">MNFKRMTDLDLAGKRVLIREDLNVPVKDGKVTSDARIRASLPTIEHALKAGAKVMLMSHLGRPTEGEYAEEFSLQPVADHLGGLLGRDVPLVKDWLGGVEVADGQVVLCENVRFNQGEKKDDEALSQKMAALCDIYVMDAFGTAHRAQASTHGVGKFAPVACAGPLLANELDALGKALDAPAKPLVAIVGGSKVSTKLEVLESLSDKVDQLVVGGGIANTFLAAAGHPVGKSLYEKDLIPAAQKIAEKVHIPIPVDVVTAKAFSESAEAATKKVEDVADDDMILDVGPQTAHIVAALMKEAKTIIWNGPVGVFEFDQFGEGTREMALAIADSDAFSIAGGGDTLAAVDKYGITDKVSYISTGGGAFLEFVEGKVLPAVAMLEARAKD</sequence>
<accession>Q0VL87</accession>
<comment type="catalytic activity">
    <reaction evidence="1">
        <text>(2R)-3-phosphoglycerate + ATP = (2R)-3-phospho-glyceroyl phosphate + ADP</text>
        <dbReference type="Rhea" id="RHEA:14801"/>
        <dbReference type="ChEBI" id="CHEBI:30616"/>
        <dbReference type="ChEBI" id="CHEBI:57604"/>
        <dbReference type="ChEBI" id="CHEBI:58272"/>
        <dbReference type="ChEBI" id="CHEBI:456216"/>
        <dbReference type="EC" id="2.7.2.3"/>
    </reaction>
</comment>
<comment type="pathway">
    <text evidence="1">Carbohydrate degradation; glycolysis; pyruvate from D-glyceraldehyde 3-phosphate: step 2/5.</text>
</comment>
<comment type="subunit">
    <text evidence="1">Monomer.</text>
</comment>
<comment type="subcellular location">
    <subcellularLocation>
        <location evidence="1">Cytoplasm</location>
    </subcellularLocation>
</comment>
<comment type="similarity">
    <text evidence="1">Belongs to the phosphoglycerate kinase family.</text>
</comment>
<reference key="1">
    <citation type="journal article" date="2006" name="Nat. Biotechnol.">
        <title>Genome sequence of the ubiquitous hydrocarbon-degrading marine bacterium Alcanivorax borkumensis.</title>
        <authorList>
            <person name="Schneiker S."/>
            <person name="Martins dos Santos V.A.P."/>
            <person name="Bartels D."/>
            <person name="Bekel T."/>
            <person name="Brecht M."/>
            <person name="Buhrmester J."/>
            <person name="Chernikova T.N."/>
            <person name="Denaro R."/>
            <person name="Ferrer M."/>
            <person name="Gertler C."/>
            <person name="Goesmann A."/>
            <person name="Golyshina O.V."/>
            <person name="Kaminski F."/>
            <person name="Khachane A.N."/>
            <person name="Lang S."/>
            <person name="Linke B."/>
            <person name="McHardy A.C."/>
            <person name="Meyer F."/>
            <person name="Nechitaylo T."/>
            <person name="Puehler A."/>
            <person name="Regenhardt D."/>
            <person name="Rupp O."/>
            <person name="Sabirova J.S."/>
            <person name="Selbitschka W."/>
            <person name="Yakimov M.M."/>
            <person name="Timmis K.N."/>
            <person name="Vorhoelter F.-J."/>
            <person name="Weidner S."/>
            <person name="Kaiser O."/>
            <person name="Golyshin P.N."/>
        </authorList>
    </citation>
    <scope>NUCLEOTIDE SEQUENCE [LARGE SCALE GENOMIC DNA]</scope>
    <source>
        <strain>ATCC 700651 / DSM 11573 / NCIMB 13689 / SK2</strain>
    </source>
</reference>
<feature type="chain" id="PRO_1000057955" description="Phosphoglycerate kinase">
    <location>
        <begin position="1"/>
        <end position="387"/>
    </location>
</feature>
<feature type="binding site" evidence="1">
    <location>
        <begin position="21"/>
        <end position="23"/>
    </location>
    <ligand>
        <name>substrate</name>
    </ligand>
</feature>
<feature type="binding site" evidence="1">
    <location>
        <position position="36"/>
    </location>
    <ligand>
        <name>substrate</name>
    </ligand>
</feature>
<feature type="binding site" evidence="1">
    <location>
        <begin position="59"/>
        <end position="62"/>
    </location>
    <ligand>
        <name>substrate</name>
    </ligand>
</feature>
<feature type="binding site" evidence="1">
    <location>
        <position position="113"/>
    </location>
    <ligand>
        <name>substrate</name>
    </ligand>
</feature>
<feature type="binding site" evidence="1">
    <location>
        <position position="146"/>
    </location>
    <ligand>
        <name>substrate</name>
    </ligand>
</feature>
<feature type="binding site" evidence="1">
    <location>
        <position position="197"/>
    </location>
    <ligand>
        <name>ATP</name>
        <dbReference type="ChEBI" id="CHEBI:30616"/>
    </ligand>
</feature>
<feature type="binding site" evidence="1">
    <location>
        <position position="314"/>
    </location>
    <ligand>
        <name>ATP</name>
        <dbReference type="ChEBI" id="CHEBI:30616"/>
    </ligand>
</feature>
<feature type="binding site" evidence="1">
    <location>
        <begin position="340"/>
        <end position="343"/>
    </location>
    <ligand>
        <name>ATP</name>
        <dbReference type="ChEBI" id="CHEBI:30616"/>
    </ligand>
</feature>
<dbReference type="EC" id="2.7.2.3" evidence="1"/>
<dbReference type="EMBL" id="AM286690">
    <property type="protein sequence ID" value="CAL18061.1"/>
    <property type="molecule type" value="Genomic_DNA"/>
</dbReference>
<dbReference type="RefSeq" id="WP_011589884.1">
    <property type="nucleotide sequence ID" value="NC_008260.1"/>
</dbReference>
<dbReference type="SMR" id="Q0VL87"/>
<dbReference type="STRING" id="393595.ABO_2613"/>
<dbReference type="KEGG" id="abo:ABO_2613"/>
<dbReference type="eggNOG" id="COG0126">
    <property type="taxonomic scope" value="Bacteria"/>
</dbReference>
<dbReference type="HOGENOM" id="CLU_025427_0_2_6"/>
<dbReference type="OrthoDB" id="9808460at2"/>
<dbReference type="UniPathway" id="UPA00109">
    <property type="reaction ID" value="UER00185"/>
</dbReference>
<dbReference type="Proteomes" id="UP000008871">
    <property type="component" value="Chromosome"/>
</dbReference>
<dbReference type="GO" id="GO:0005829">
    <property type="term" value="C:cytosol"/>
    <property type="evidence" value="ECO:0007669"/>
    <property type="project" value="TreeGrafter"/>
</dbReference>
<dbReference type="GO" id="GO:0043531">
    <property type="term" value="F:ADP binding"/>
    <property type="evidence" value="ECO:0007669"/>
    <property type="project" value="TreeGrafter"/>
</dbReference>
<dbReference type="GO" id="GO:0005524">
    <property type="term" value="F:ATP binding"/>
    <property type="evidence" value="ECO:0007669"/>
    <property type="project" value="UniProtKB-KW"/>
</dbReference>
<dbReference type="GO" id="GO:0004618">
    <property type="term" value="F:phosphoglycerate kinase activity"/>
    <property type="evidence" value="ECO:0007669"/>
    <property type="project" value="UniProtKB-UniRule"/>
</dbReference>
<dbReference type="GO" id="GO:0006094">
    <property type="term" value="P:gluconeogenesis"/>
    <property type="evidence" value="ECO:0007669"/>
    <property type="project" value="TreeGrafter"/>
</dbReference>
<dbReference type="GO" id="GO:0006096">
    <property type="term" value="P:glycolytic process"/>
    <property type="evidence" value="ECO:0007669"/>
    <property type="project" value="UniProtKB-UniRule"/>
</dbReference>
<dbReference type="FunFam" id="3.40.50.1260:FF:000001">
    <property type="entry name" value="Phosphoglycerate kinase"/>
    <property type="match status" value="1"/>
</dbReference>
<dbReference type="FunFam" id="3.40.50.1260:FF:000002">
    <property type="entry name" value="Phosphoglycerate kinase"/>
    <property type="match status" value="1"/>
</dbReference>
<dbReference type="Gene3D" id="3.40.50.1260">
    <property type="entry name" value="Phosphoglycerate kinase, N-terminal domain"/>
    <property type="match status" value="2"/>
</dbReference>
<dbReference type="HAMAP" id="MF_00145">
    <property type="entry name" value="Phosphoglyc_kinase"/>
    <property type="match status" value="1"/>
</dbReference>
<dbReference type="InterPro" id="IPR001576">
    <property type="entry name" value="Phosphoglycerate_kinase"/>
</dbReference>
<dbReference type="InterPro" id="IPR015911">
    <property type="entry name" value="Phosphoglycerate_kinase_CS"/>
</dbReference>
<dbReference type="InterPro" id="IPR015824">
    <property type="entry name" value="Phosphoglycerate_kinase_N"/>
</dbReference>
<dbReference type="InterPro" id="IPR036043">
    <property type="entry name" value="Phosphoglycerate_kinase_sf"/>
</dbReference>
<dbReference type="PANTHER" id="PTHR11406">
    <property type="entry name" value="PHOSPHOGLYCERATE KINASE"/>
    <property type="match status" value="1"/>
</dbReference>
<dbReference type="PANTHER" id="PTHR11406:SF23">
    <property type="entry name" value="PHOSPHOGLYCERATE KINASE 1, CHLOROPLASTIC-RELATED"/>
    <property type="match status" value="1"/>
</dbReference>
<dbReference type="Pfam" id="PF00162">
    <property type="entry name" value="PGK"/>
    <property type="match status" value="1"/>
</dbReference>
<dbReference type="PIRSF" id="PIRSF000724">
    <property type="entry name" value="Pgk"/>
    <property type="match status" value="1"/>
</dbReference>
<dbReference type="PRINTS" id="PR00477">
    <property type="entry name" value="PHGLYCKINASE"/>
</dbReference>
<dbReference type="SUPFAM" id="SSF53748">
    <property type="entry name" value="Phosphoglycerate kinase"/>
    <property type="match status" value="1"/>
</dbReference>
<dbReference type="PROSITE" id="PS00111">
    <property type="entry name" value="PGLYCERATE_KINASE"/>
    <property type="match status" value="1"/>
</dbReference>